<keyword id="KW-0002">3D-structure</keyword>
<keyword id="KW-0131">Cell cycle</keyword>
<keyword id="KW-0132">Cell division</keyword>
<keyword id="KW-0344">Guanine-nucleotide releasing factor</keyword>
<keyword id="KW-0498">Mitosis</keyword>
<keyword id="KW-1185">Reference proteome</keyword>
<keyword id="KW-0728">SH3 domain</keyword>
<feature type="chain" id="PRO_0000068861" description="Cell division control protein 25">
    <location>
        <begin position="1"/>
        <end position="1333"/>
    </location>
</feature>
<feature type="domain" description="SH3" evidence="3">
    <location>
        <begin position="30"/>
        <end position="94"/>
    </location>
</feature>
<feature type="domain" description="N-terminal Ras-GEF" evidence="1">
    <location>
        <begin position="900"/>
        <end position="1034"/>
    </location>
</feature>
<feature type="domain" description="Ras-GEF" evidence="2">
    <location>
        <begin position="1068"/>
        <end position="1305"/>
    </location>
</feature>
<feature type="region of interest" description="Disordered" evidence="4">
    <location>
        <begin position="1"/>
        <end position="27"/>
    </location>
</feature>
<feature type="region of interest" description="Disordered" evidence="4">
    <location>
        <begin position="133"/>
        <end position="206"/>
    </location>
</feature>
<feature type="region of interest" description="Disordered" evidence="4">
    <location>
        <begin position="474"/>
        <end position="497"/>
    </location>
</feature>
<feature type="compositionally biased region" description="Basic and acidic residues" evidence="4">
    <location>
        <begin position="17"/>
        <end position="27"/>
    </location>
</feature>
<feature type="compositionally biased region" description="Polar residues" evidence="4">
    <location>
        <begin position="133"/>
        <end position="166"/>
    </location>
</feature>
<feature type="compositionally biased region" description="Low complexity" evidence="4">
    <location>
        <begin position="167"/>
        <end position="176"/>
    </location>
</feature>
<feature type="compositionally biased region" description="Polar residues" evidence="4">
    <location>
        <begin position="177"/>
        <end position="187"/>
    </location>
</feature>
<feature type="compositionally biased region" description="Polar residues" evidence="4">
    <location>
        <begin position="194"/>
        <end position="206"/>
    </location>
</feature>
<feature type="compositionally biased region" description="Low complexity" evidence="4">
    <location>
        <begin position="474"/>
        <end position="485"/>
    </location>
</feature>
<feature type="sequence conflict" description="In Ref. 1; AAA34329." evidence="5" ref="1">
    <original>L</original>
    <variation>P</variation>
    <location>
        <position position="198"/>
    </location>
</feature>
<feature type="sequence conflict" description="In Ref. 1; AAA34329." evidence="5" ref="1">
    <original>AV</original>
    <variation>PA</variation>
    <location>
        <begin position="1308"/>
        <end position="1309"/>
    </location>
</feature>
<feature type="helix" evidence="6">
    <location>
        <begin position="886"/>
        <end position="888"/>
    </location>
</feature>
<feature type="helix" evidence="6">
    <location>
        <begin position="893"/>
        <end position="895"/>
    </location>
</feature>
<feature type="strand" evidence="6">
    <location>
        <begin position="896"/>
        <end position="898"/>
    </location>
</feature>
<feature type="strand" evidence="6">
    <location>
        <begin position="904"/>
        <end position="907"/>
    </location>
</feature>
<feature type="helix" evidence="6">
    <location>
        <begin position="909"/>
        <end position="916"/>
    </location>
</feature>
<feature type="helix" evidence="6">
    <location>
        <begin position="924"/>
        <end position="933"/>
    </location>
</feature>
<feature type="helix" evidence="6">
    <location>
        <begin position="934"/>
        <end position="936"/>
    </location>
</feature>
<feature type="helix" evidence="6">
    <location>
        <begin position="940"/>
        <end position="951"/>
    </location>
</feature>
<feature type="helix" evidence="6">
    <location>
        <begin position="961"/>
        <end position="970"/>
    </location>
</feature>
<feature type="helix" evidence="6">
    <location>
        <begin position="972"/>
        <end position="989"/>
    </location>
</feature>
<feature type="helix" evidence="6">
    <location>
        <begin position="993"/>
        <end position="995"/>
    </location>
</feature>
<feature type="helix" evidence="6">
    <location>
        <begin position="998"/>
        <end position="1008"/>
    </location>
</feature>
<feature type="helix" evidence="6">
    <location>
        <begin position="1011"/>
        <end position="1014"/>
    </location>
</feature>
<feature type="helix" evidence="6">
    <location>
        <begin position="1018"/>
        <end position="1030"/>
    </location>
</feature>
<feature type="helix" evidence="6">
    <location>
        <begin position="1055"/>
        <end position="1057"/>
    </location>
</feature>
<feature type="helix" evidence="6">
    <location>
        <begin position="1064"/>
        <end position="1066"/>
    </location>
</feature>
<feature type="helix" evidence="6">
    <location>
        <begin position="1069"/>
        <end position="1085"/>
    </location>
</feature>
<feature type="helix" evidence="6">
    <location>
        <begin position="1089"/>
        <end position="1097"/>
    </location>
</feature>
<feature type="helix" evidence="6">
    <location>
        <begin position="1098"/>
        <end position="1101"/>
    </location>
</feature>
<feature type="helix" evidence="6">
    <location>
        <begin position="1108"/>
        <end position="1129"/>
    </location>
</feature>
<feature type="helix" evidence="6">
    <location>
        <begin position="1134"/>
        <end position="1153"/>
    </location>
</feature>
<feature type="helix" evidence="6">
    <location>
        <begin position="1157"/>
        <end position="1167"/>
    </location>
</feature>
<feature type="helix" evidence="6">
    <location>
        <begin position="1170"/>
        <end position="1173"/>
    </location>
</feature>
<feature type="helix" evidence="6">
    <location>
        <begin position="1176"/>
        <end position="1179"/>
    </location>
</feature>
<feature type="helix" evidence="6">
    <location>
        <begin position="1184"/>
        <end position="1196"/>
    </location>
</feature>
<feature type="helix" evidence="6">
    <location>
        <begin position="1199"/>
        <end position="1201"/>
    </location>
</feature>
<feature type="helix" evidence="6">
    <location>
        <begin position="1204"/>
        <end position="1210"/>
    </location>
</feature>
<feature type="helix" evidence="6">
    <location>
        <begin position="1222"/>
        <end position="1235"/>
    </location>
</feature>
<feature type="helix" evidence="6">
    <location>
        <begin position="1240"/>
        <end position="1242"/>
    </location>
</feature>
<feature type="strand" evidence="6">
    <location>
        <begin position="1246"/>
        <end position="1248"/>
    </location>
</feature>
<feature type="helix" evidence="6">
    <location>
        <begin position="1249"/>
        <end position="1259"/>
    </location>
</feature>
<feature type="helix" evidence="6">
    <location>
        <begin position="1260"/>
        <end position="1266"/>
    </location>
</feature>
<feature type="helix" evidence="6">
    <location>
        <begin position="1276"/>
        <end position="1288"/>
    </location>
</feature>
<feature type="helix" evidence="6">
    <location>
        <begin position="1292"/>
        <end position="1302"/>
    </location>
</feature>
<comment type="function">
    <text>Promotes the exchange of Ras-bound GDP by GTP. This protein positively controls the level of cellular cAMP at start, the stage at which the yeast cell division cycle is triggered.</text>
</comment>
<dbReference type="EMBL" id="M94160">
    <property type="protein sequence ID" value="AAA34329.2"/>
    <property type="molecule type" value="Genomic_DNA"/>
</dbReference>
<dbReference type="EMBL" id="CP017625">
    <property type="protein sequence ID" value="AOW28416.1"/>
    <property type="molecule type" value="Genomic_DNA"/>
</dbReference>
<dbReference type="PIR" id="S30356">
    <property type="entry name" value="S30356"/>
</dbReference>
<dbReference type="RefSeq" id="XP_712727.2">
    <property type="nucleotide sequence ID" value="XM_707634.2"/>
</dbReference>
<dbReference type="PDB" id="7NZZ">
    <property type="method" value="X-ray"/>
    <property type="resolution" value="2.45 A"/>
    <property type="chains" value="A/B=860-1333"/>
</dbReference>
<dbReference type="PDBsum" id="7NZZ"/>
<dbReference type="SASBDB" id="P43069"/>
<dbReference type="SMR" id="P43069"/>
<dbReference type="BioGRID" id="1228753">
    <property type="interactions" value="2"/>
</dbReference>
<dbReference type="FunCoup" id="P43069">
    <property type="interactions" value="278"/>
</dbReference>
<dbReference type="STRING" id="237561.P43069"/>
<dbReference type="EnsemblFungi" id="C3_03890W_A-T">
    <property type="protein sequence ID" value="C3_03890W_A-T-p1"/>
    <property type="gene ID" value="C3_03890W_A"/>
</dbReference>
<dbReference type="GeneID" id="3645660"/>
<dbReference type="KEGG" id="cal:CAALFM_C303890WA"/>
<dbReference type="CGD" id="CAL0000178834">
    <property type="gene designation" value="CSC25"/>
</dbReference>
<dbReference type="VEuPathDB" id="FungiDB:C3_03890W_A"/>
<dbReference type="eggNOG" id="KOG3417">
    <property type="taxonomic scope" value="Eukaryota"/>
</dbReference>
<dbReference type="HOGENOM" id="CLU_002171_1_0_1"/>
<dbReference type="InParanoid" id="P43069"/>
<dbReference type="OMA" id="SEHEYSL"/>
<dbReference type="OrthoDB" id="546434at2759"/>
<dbReference type="PRO" id="PR:P43069"/>
<dbReference type="Proteomes" id="UP000000559">
    <property type="component" value="Chromosome 3"/>
</dbReference>
<dbReference type="GO" id="GO:0005886">
    <property type="term" value="C:plasma membrane"/>
    <property type="evidence" value="ECO:0000318"/>
    <property type="project" value="GO_Central"/>
</dbReference>
<dbReference type="GO" id="GO:0005085">
    <property type="term" value="F:guanyl-nucleotide exchange factor activity"/>
    <property type="evidence" value="ECO:0000314"/>
    <property type="project" value="CGD"/>
</dbReference>
<dbReference type="GO" id="GO:0019933">
    <property type="term" value="P:cAMP-mediated signaling"/>
    <property type="evidence" value="ECO:0000315"/>
    <property type="project" value="CGD"/>
</dbReference>
<dbReference type="GO" id="GO:0051301">
    <property type="term" value="P:cell division"/>
    <property type="evidence" value="ECO:0007669"/>
    <property type="project" value="UniProtKB-KW"/>
</dbReference>
<dbReference type="GO" id="GO:0071333">
    <property type="term" value="P:cellular response to glucose stimulus"/>
    <property type="evidence" value="ECO:0000315"/>
    <property type="project" value="CGD"/>
</dbReference>
<dbReference type="GO" id="GO:0009267">
    <property type="term" value="P:cellular response to starvation"/>
    <property type="evidence" value="ECO:0000315"/>
    <property type="project" value="CGD"/>
</dbReference>
<dbReference type="GO" id="GO:0030447">
    <property type="term" value="P:filamentous growth"/>
    <property type="evidence" value="ECO:0000315"/>
    <property type="project" value="CGD"/>
</dbReference>
<dbReference type="GO" id="GO:0036180">
    <property type="term" value="P:filamentous growth of a population of unicellular organisms in response to biotic stimulus"/>
    <property type="evidence" value="ECO:0000315"/>
    <property type="project" value="CGD"/>
</dbReference>
<dbReference type="GO" id="GO:0036170">
    <property type="term" value="P:filamentous growth of a population of unicellular organisms in response to starvation"/>
    <property type="evidence" value="ECO:0000315"/>
    <property type="project" value="CGD"/>
</dbReference>
<dbReference type="GO" id="GO:0007265">
    <property type="term" value="P:Ras protein signal transduction"/>
    <property type="evidence" value="ECO:0000315"/>
    <property type="project" value="CGD"/>
</dbReference>
<dbReference type="CDD" id="cd00155">
    <property type="entry name" value="RasGEF"/>
    <property type="match status" value="1"/>
</dbReference>
<dbReference type="CDD" id="cd06224">
    <property type="entry name" value="REM"/>
    <property type="match status" value="1"/>
</dbReference>
<dbReference type="CDD" id="cd11883">
    <property type="entry name" value="SH3_Sdc25"/>
    <property type="match status" value="1"/>
</dbReference>
<dbReference type="Gene3D" id="1.10.840.10">
    <property type="entry name" value="Ras guanine-nucleotide exchange factors catalytic domain"/>
    <property type="match status" value="1"/>
</dbReference>
<dbReference type="Gene3D" id="2.30.30.40">
    <property type="entry name" value="SH3 Domains"/>
    <property type="match status" value="1"/>
</dbReference>
<dbReference type="Gene3D" id="1.20.870.10">
    <property type="entry name" value="Son of sevenless (SoS) protein Chain: S domain 1"/>
    <property type="match status" value="1"/>
</dbReference>
<dbReference type="InterPro" id="IPR008937">
    <property type="entry name" value="Ras-like_GEF"/>
</dbReference>
<dbReference type="InterPro" id="IPR000651">
    <property type="entry name" value="Ras-like_Gua-exchang_fac_N"/>
</dbReference>
<dbReference type="InterPro" id="IPR019804">
    <property type="entry name" value="Ras_G-nucl-exch_fac_CS"/>
</dbReference>
<dbReference type="InterPro" id="IPR023578">
    <property type="entry name" value="Ras_GEF_dom_sf"/>
</dbReference>
<dbReference type="InterPro" id="IPR001895">
    <property type="entry name" value="RASGEF_cat_dom"/>
</dbReference>
<dbReference type="InterPro" id="IPR036964">
    <property type="entry name" value="RASGEF_cat_dom_sf"/>
</dbReference>
<dbReference type="InterPro" id="IPR036028">
    <property type="entry name" value="SH3-like_dom_sf"/>
</dbReference>
<dbReference type="InterPro" id="IPR001452">
    <property type="entry name" value="SH3_domain"/>
</dbReference>
<dbReference type="PANTHER" id="PTHR23113:SF368">
    <property type="entry name" value="CELL DIVISION CONTROL PROTEIN 25"/>
    <property type="match status" value="1"/>
</dbReference>
<dbReference type="PANTHER" id="PTHR23113">
    <property type="entry name" value="GUANINE NUCLEOTIDE EXCHANGE FACTOR"/>
    <property type="match status" value="1"/>
</dbReference>
<dbReference type="Pfam" id="PF00617">
    <property type="entry name" value="RasGEF"/>
    <property type="match status" value="1"/>
</dbReference>
<dbReference type="Pfam" id="PF00618">
    <property type="entry name" value="RasGEF_N"/>
    <property type="match status" value="1"/>
</dbReference>
<dbReference type="Pfam" id="PF00018">
    <property type="entry name" value="SH3_1"/>
    <property type="match status" value="1"/>
</dbReference>
<dbReference type="SMART" id="SM00147">
    <property type="entry name" value="RasGEF"/>
    <property type="match status" value="1"/>
</dbReference>
<dbReference type="SMART" id="SM00229">
    <property type="entry name" value="RasGEFN"/>
    <property type="match status" value="1"/>
</dbReference>
<dbReference type="SMART" id="SM00326">
    <property type="entry name" value="SH3"/>
    <property type="match status" value="1"/>
</dbReference>
<dbReference type="SUPFAM" id="SSF48366">
    <property type="entry name" value="Ras GEF"/>
    <property type="match status" value="1"/>
</dbReference>
<dbReference type="SUPFAM" id="SSF50044">
    <property type="entry name" value="SH3-domain"/>
    <property type="match status" value="1"/>
</dbReference>
<dbReference type="PROSITE" id="PS00720">
    <property type="entry name" value="RASGEF"/>
    <property type="match status" value="1"/>
</dbReference>
<dbReference type="PROSITE" id="PS50009">
    <property type="entry name" value="RASGEF_CAT"/>
    <property type="match status" value="1"/>
</dbReference>
<dbReference type="PROSITE" id="PS50212">
    <property type="entry name" value="RASGEF_NTER"/>
    <property type="match status" value="1"/>
</dbReference>
<dbReference type="PROSITE" id="PS50002">
    <property type="entry name" value="SH3"/>
    <property type="match status" value="1"/>
</dbReference>
<protein>
    <recommendedName>
        <fullName>Cell division control protein 25</fullName>
    </recommendedName>
</protein>
<organism>
    <name type="scientific">Candida albicans (strain SC5314 / ATCC MYA-2876)</name>
    <name type="common">Yeast</name>
    <dbReference type="NCBI Taxonomy" id="237561"/>
    <lineage>
        <taxon>Eukaryota</taxon>
        <taxon>Fungi</taxon>
        <taxon>Dikarya</taxon>
        <taxon>Ascomycota</taxon>
        <taxon>Saccharomycotina</taxon>
        <taxon>Pichiomycetes</taxon>
        <taxon>Debaryomycetaceae</taxon>
        <taxon>Candida/Lodderomyces clade</taxon>
        <taxon>Candida</taxon>
    </lineage>
</organism>
<reference key="1">
    <citation type="journal article" date="1993" name="Eur. J. Biochem.">
        <title>A Candida albicans homolog of CDC25 is functional in Saccharomyces cerevisiae.</title>
        <authorList>
            <person name="Goldberg D."/>
            <person name="Marbach I."/>
            <person name="Gross E."/>
            <person name="Levitzki A."/>
            <person name="Simchen G."/>
        </authorList>
    </citation>
    <scope>NUCLEOTIDE SEQUENCE [GENOMIC DNA]</scope>
    <source>
        <strain>792-1</strain>
    </source>
</reference>
<reference key="2">
    <citation type="journal article" date="2004" name="Proc. Natl. Acad. Sci. U.S.A.">
        <title>The diploid genome sequence of Candida albicans.</title>
        <authorList>
            <person name="Jones T."/>
            <person name="Federspiel N.A."/>
            <person name="Chibana H."/>
            <person name="Dungan J."/>
            <person name="Kalman S."/>
            <person name="Magee B.B."/>
            <person name="Newport G."/>
            <person name="Thorstenson Y.R."/>
            <person name="Agabian N."/>
            <person name="Magee P.T."/>
            <person name="Davis R.W."/>
            <person name="Scherer S."/>
        </authorList>
    </citation>
    <scope>NUCLEOTIDE SEQUENCE [LARGE SCALE GENOMIC DNA]</scope>
    <source>
        <strain>SC5314 / ATCC MYA-2876</strain>
    </source>
</reference>
<reference key="3">
    <citation type="journal article" date="2007" name="Genome Biol.">
        <title>Assembly of the Candida albicans genome into sixteen supercontigs aligned on the eight chromosomes.</title>
        <authorList>
            <person name="van het Hoog M."/>
            <person name="Rast T.J."/>
            <person name="Martchenko M."/>
            <person name="Grindle S."/>
            <person name="Dignard D."/>
            <person name="Hogues H."/>
            <person name="Cuomo C."/>
            <person name="Berriman M."/>
            <person name="Scherer S."/>
            <person name="Magee B.B."/>
            <person name="Whiteway M."/>
            <person name="Chibana H."/>
            <person name="Nantel A."/>
            <person name="Magee P.T."/>
        </authorList>
    </citation>
    <scope>GENOME REANNOTATION</scope>
    <source>
        <strain>SC5314 / ATCC MYA-2876</strain>
    </source>
</reference>
<reference key="4">
    <citation type="journal article" date="2013" name="Genome Biol.">
        <title>Assembly of a phased diploid Candida albicans genome facilitates allele-specific measurements and provides a simple model for repeat and indel structure.</title>
        <authorList>
            <person name="Muzzey D."/>
            <person name="Schwartz K."/>
            <person name="Weissman J.S."/>
            <person name="Sherlock G."/>
        </authorList>
    </citation>
    <scope>NUCLEOTIDE SEQUENCE [LARGE SCALE GENOMIC DNA]</scope>
    <scope>GENOME REANNOTATION</scope>
    <source>
        <strain>SC5314 / ATCC MYA-2876</strain>
    </source>
</reference>
<proteinExistence type="evidence at protein level"/>
<name>CDC25_CANAL</name>
<sequence>MSSANYISDEVPPDMVSPHDHRPSKDEPLKHLDTVIALYDFPGTQSSHLPLNLGDTIHVLSKSATGWWDGVVMGNSGELQRGWFPHNYVRSVNYVQPVLKKLKDNKDLDSITAANTAANVVMPSLTNLIQKSLQESERNSPANSTRKNSVVSFASSETSMPSDSKYTQQQTNTNQNSPEYQSISLPSTRDHSTVEMQLPSQQSSISHTLTGFGIGDDEIIPMEVEEAEKLVEEYRLKYNKTVTWIPRTSTKGDIIFYCEQLDVYCESLPLILFDGEASSPNLEYPGSDVIMDPTPISVQGSQSMENVLDTREGSAAGSFDSTKRDSNVSMSTQSSGSSYHRFSRPFFSVDNLFYKHSSDIGTWNELKEQCNYILDLMLKAIKDQNRQFFSTHFSRLNKLVVALCAAVRLNQEDYIDTKYENTTRRKLKRVCASFAQIYINGILHLSVLHYSLEGFNEGRLFGYDMGKLNRSSSSSAFQSPASSLSTIRQGSDDSTRFAQKLSQDRNSEGNGDMNYINQLVYEIDNLRENVNSIVKIFLKLSANKKIKNSDYDSSDASDDEGEDRFDILPQVYPRFLVDEFNGGNWCNPFFSTKNTVLNVSGDDLKNRYHTKIIIDHSAYDSLSQYVDKIVDACENILEALDPKVQNTFYYNEMLRNERNTQILRLTYKSLYHCSAMVDLIESFDFTVFCSVKRHTGNAIDTEDESYENPSVWGDHYDSNLSFDYPVVLEFFRLKQELHDLVAKIIMATQSLTLEDPEVFKGLKEEDPLFYNREISKIPKEKAALLLSSILKEQLSFKDGGAISLNPDTLLSGYLVEIAKTTKTVLLITQQLIEERETIINYATRVMQDNFDVQLLLVERNNTSSSEKADDNSYYVGGHKKSTDVPWYLEGDDEYELLLDVKGNIKGGSKEALVSHLTHHLSLDSNFNAVFLLMFSSMMSLGELISLLIARFNIEPPEGLSYEEYNLWVSKKRNPIRLRVINIMKLLLEKNWSMSYYNEPVLRRWLTFAHSDQVQTYSLGNLLVNYLERLLRGERIYVERDPVIPNTKPPAPLTKGSSLSKKPRVMDIDYVELARQLTLREFKLYCKITKFACLAKVWGKKSGLSESIDSITQFIKASNQLTNFVGYMILRKADPKKRVQIIRYFIQVADKCRQYNNFSSMTAIISALYSSPIHRLKKTWEYMNADALSNLKNMNKLMNSSRNFNEYRDVLKFIGSEPCVPFFGVYLSDLTFVYHGNPDYLYNRTRQVNFAKRAKTSEIVSGIDRFKTTGYNFQEVPEIQKFLDAWFEKCPTIDEQYQISLNLEPREQAVGASNSNSTTNATTNIKSFKPFSLK</sequence>
<accession>P43069</accession>
<accession>A0A1D8PJT3</accession>
<accession>Q59SU3</accession>
<gene>
    <name type="primary">CDC25</name>
    <name type="synonym">CSC25</name>
    <name type="ordered locus">CAALFM_C303890WA</name>
    <name type="ORF">CaO19.14188</name>
    <name type="ORF">CaO19.6926</name>
</gene>
<evidence type="ECO:0000255" key="1">
    <source>
        <dbReference type="PROSITE-ProRule" id="PRU00135"/>
    </source>
</evidence>
<evidence type="ECO:0000255" key="2">
    <source>
        <dbReference type="PROSITE-ProRule" id="PRU00168"/>
    </source>
</evidence>
<evidence type="ECO:0000255" key="3">
    <source>
        <dbReference type="PROSITE-ProRule" id="PRU00192"/>
    </source>
</evidence>
<evidence type="ECO:0000256" key="4">
    <source>
        <dbReference type="SAM" id="MobiDB-lite"/>
    </source>
</evidence>
<evidence type="ECO:0000305" key="5"/>
<evidence type="ECO:0007829" key="6">
    <source>
        <dbReference type="PDB" id="7NZZ"/>
    </source>
</evidence>